<sequence length="182" mass="21042">MSMKGKETMSNEKIVVGKFGATYGIRGWLKVFSYTDNAESIFDYSPWYINQKGKWVEYKVESWKRHNKGMVAKLEGMDVREDAHLMTNFEIAIDPAVLPELSEDEFYWRELFGMHVVTTKGYDLGVVTDMLETGSNDVLVVKANLKDAFGQKERLIPFLEEQVIIKVDREAQRIEVDWDPGF</sequence>
<comment type="function">
    <text evidence="1">An accessory protein needed during the final step in the assembly of 30S ribosomal subunit, possibly for assembly of the head region. Essential for efficient processing of 16S rRNA. May be needed both before and after RbfA during the maturation of 16S rRNA. It has affinity for free ribosomal 30S subunits but not for 70S ribosomes.</text>
</comment>
<comment type="subunit">
    <text evidence="1">Binds ribosomal protein uS19.</text>
</comment>
<comment type="subcellular location">
    <subcellularLocation>
        <location evidence="1">Cytoplasm</location>
    </subcellularLocation>
</comment>
<comment type="domain">
    <text evidence="1">The PRC barrel domain binds ribosomal protein uS19.</text>
</comment>
<comment type="similarity">
    <text evidence="1">Belongs to the RimM family.</text>
</comment>
<gene>
    <name evidence="1" type="primary">rimM</name>
    <name type="ordered locus">VP2532</name>
</gene>
<evidence type="ECO:0000255" key="1">
    <source>
        <dbReference type="HAMAP-Rule" id="MF_00014"/>
    </source>
</evidence>
<accession>Q87LS9</accession>
<keyword id="KW-0143">Chaperone</keyword>
<keyword id="KW-0963">Cytoplasm</keyword>
<keyword id="KW-0690">Ribosome biogenesis</keyword>
<keyword id="KW-0698">rRNA processing</keyword>
<organism>
    <name type="scientific">Vibrio parahaemolyticus serotype O3:K6 (strain RIMD 2210633)</name>
    <dbReference type="NCBI Taxonomy" id="223926"/>
    <lineage>
        <taxon>Bacteria</taxon>
        <taxon>Pseudomonadati</taxon>
        <taxon>Pseudomonadota</taxon>
        <taxon>Gammaproteobacteria</taxon>
        <taxon>Vibrionales</taxon>
        <taxon>Vibrionaceae</taxon>
        <taxon>Vibrio</taxon>
    </lineage>
</organism>
<dbReference type="EMBL" id="BA000031">
    <property type="protein sequence ID" value="BAC60795.1"/>
    <property type="molecule type" value="Genomic_DNA"/>
</dbReference>
<dbReference type="RefSeq" id="NP_798911.1">
    <property type="nucleotide sequence ID" value="NC_004603.1"/>
</dbReference>
<dbReference type="RefSeq" id="WP_005462552.1">
    <property type="nucleotide sequence ID" value="NC_004603.1"/>
</dbReference>
<dbReference type="SMR" id="Q87LS9"/>
<dbReference type="GeneID" id="1190047"/>
<dbReference type="KEGG" id="vpa:VP2532"/>
<dbReference type="PATRIC" id="fig|223926.6.peg.2429"/>
<dbReference type="eggNOG" id="COG0806">
    <property type="taxonomic scope" value="Bacteria"/>
</dbReference>
<dbReference type="HOGENOM" id="CLU_077636_1_0_6"/>
<dbReference type="Proteomes" id="UP000002493">
    <property type="component" value="Chromosome 1"/>
</dbReference>
<dbReference type="GO" id="GO:0005737">
    <property type="term" value="C:cytoplasm"/>
    <property type="evidence" value="ECO:0007669"/>
    <property type="project" value="UniProtKB-SubCell"/>
</dbReference>
<dbReference type="GO" id="GO:0005840">
    <property type="term" value="C:ribosome"/>
    <property type="evidence" value="ECO:0007669"/>
    <property type="project" value="InterPro"/>
</dbReference>
<dbReference type="GO" id="GO:0043022">
    <property type="term" value="F:ribosome binding"/>
    <property type="evidence" value="ECO:0007669"/>
    <property type="project" value="InterPro"/>
</dbReference>
<dbReference type="GO" id="GO:0042274">
    <property type="term" value="P:ribosomal small subunit biogenesis"/>
    <property type="evidence" value="ECO:0007669"/>
    <property type="project" value="UniProtKB-UniRule"/>
</dbReference>
<dbReference type="GO" id="GO:0006364">
    <property type="term" value="P:rRNA processing"/>
    <property type="evidence" value="ECO:0007669"/>
    <property type="project" value="UniProtKB-UniRule"/>
</dbReference>
<dbReference type="FunFam" id="2.30.30.240:FF:000001">
    <property type="entry name" value="Ribosome maturation factor RimM"/>
    <property type="match status" value="1"/>
</dbReference>
<dbReference type="Gene3D" id="2.30.30.240">
    <property type="entry name" value="PRC-barrel domain"/>
    <property type="match status" value="1"/>
</dbReference>
<dbReference type="Gene3D" id="2.40.30.60">
    <property type="entry name" value="RimM"/>
    <property type="match status" value="1"/>
</dbReference>
<dbReference type="HAMAP" id="MF_00014">
    <property type="entry name" value="Ribosome_mat_RimM"/>
    <property type="match status" value="1"/>
</dbReference>
<dbReference type="InterPro" id="IPR027275">
    <property type="entry name" value="PRC-brl_dom"/>
</dbReference>
<dbReference type="InterPro" id="IPR011033">
    <property type="entry name" value="PRC_barrel-like_sf"/>
</dbReference>
<dbReference type="InterPro" id="IPR011961">
    <property type="entry name" value="RimM"/>
</dbReference>
<dbReference type="InterPro" id="IPR002676">
    <property type="entry name" value="RimM_N"/>
</dbReference>
<dbReference type="InterPro" id="IPR036976">
    <property type="entry name" value="RimM_N_sf"/>
</dbReference>
<dbReference type="InterPro" id="IPR009000">
    <property type="entry name" value="Transl_B-barrel_sf"/>
</dbReference>
<dbReference type="NCBIfam" id="TIGR02273">
    <property type="entry name" value="16S_RimM"/>
    <property type="match status" value="1"/>
</dbReference>
<dbReference type="PANTHER" id="PTHR33692">
    <property type="entry name" value="RIBOSOME MATURATION FACTOR RIMM"/>
    <property type="match status" value="1"/>
</dbReference>
<dbReference type="PANTHER" id="PTHR33692:SF1">
    <property type="entry name" value="RIBOSOME MATURATION FACTOR RIMM"/>
    <property type="match status" value="1"/>
</dbReference>
<dbReference type="Pfam" id="PF05239">
    <property type="entry name" value="PRC"/>
    <property type="match status" value="1"/>
</dbReference>
<dbReference type="Pfam" id="PF01782">
    <property type="entry name" value="RimM"/>
    <property type="match status" value="1"/>
</dbReference>
<dbReference type="SUPFAM" id="SSF50346">
    <property type="entry name" value="PRC-barrel domain"/>
    <property type="match status" value="1"/>
</dbReference>
<dbReference type="SUPFAM" id="SSF50447">
    <property type="entry name" value="Translation proteins"/>
    <property type="match status" value="1"/>
</dbReference>
<protein>
    <recommendedName>
        <fullName evidence="1">Ribosome maturation factor RimM</fullName>
    </recommendedName>
</protein>
<name>RIMM_VIBPA</name>
<proteinExistence type="inferred from homology"/>
<reference key="1">
    <citation type="journal article" date="2003" name="Lancet">
        <title>Genome sequence of Vibrio parahaemolyticus: a pathogenic mechanism distinct from that of V. cholerae.</title>
        <authorList>
            <person name="Makino K."/>
            <person name="Oshima K."/>
            <person name="Kurokawa K."/>
            <person name="Yokoyama K."/>
            <person name="Uda T."/>
            <person name="Tagomori K."/>
            <person name="Iijima Y."/>
            <person name="Najima M."/>
            <person name="Nakano M."/>
            <person name="Yamashita A."/>
            <person name="Kubota Y."/>
            <person name="Kimura S."/>
            <person name="Yasunaga T."/>
            <person name="Honda T."/>
            <person name="Shinagawa H."/>
            <person name="Hattori M."/>
            <person name="Iida T."/>
        </authorList>
    </citation>
    <scope>NUCLEOTIDE SEQUENCE [LARGE SCALE GENOMIC DNA]</scope>
    <source>
        <strain>RIMD 2210633</strain>
    </source>
</reference>
<feature type="chain" id="PRO_0000163385" description="Ribosome maturation factor RimM">
    <location>
        <begin position="1"/>
        <end position="182"/>
    </location>
</feature>
<feature type="domain" description="PRC barrel" evidence="1">
    <location>
        <begin position="103"/>
        <end position="182"/>
    </location>
</feature>